<dbReference type="EC" id="2.7.1.130" evidence="1"/>
<dbReference type="EMBL" id="CP000606">
    <property type="protein sequence ID" value="ABO23506.1"/>
    <property type="molecule type" value="Genomic_DNA"/>
</dbReference>
<dbReference type="RefSeq" id="WP_011865438.1">
    <property type="nucleotide sequence ID" value="NC_009092.1"/>
</dbReference>
<dbReference type="SMR" id="A3QDF8"/>
<dbReference type="STRING" id="323850.Shew_1639"/>
<dbReference type="KEGG" id="slo:Shew_1639"/>
<dbReference type="eggNOG" id="COG1663">
    <property type="taxonomic scope" value="Bacteria"/>
</dbReference>
<dbReference type="HOGENOM" id="CLU_038816_2_0_6"/>
<dbReference type="OrthoDB" id="9766423at2"/>
<dbReference type="UniPathway" id="UPA00359">
    <property type="reaction ID" value="UER00482"/>
</dbReference>
<dbReference type="Proteomes" id="UP000001558">
    <property type="component" value="Chromosome"/>
</dbReference>
<dbReference type="GO" id="GO:0005886">
    <property type="term" value="C:plasma membrane"/>
    <property type="evidence" value="ECO:0007669"/>
    <property type="project" value="TreeGrafter"/>
</dbReference>
<dbReference type="GO" id="GO:0005524">
    <property type="term" value="F:ATP binding"/>
    <property type="evidence" value="ECO:0007669"/>
    <property type="project" value="UniProtKB-UniRule"/>
</dbReference>
<dbReference type="GO" id="GO:0009029">
    <property type="term" value="F:tetraacyldisaccharide 4'-kinase activity"/>
    <property type="evidence" value="ECO:0007669"/>
    <property type="project" value="UniProtKB-UniRule"/>
</dbReference>
<dbReference type="GO" id="GO:0009245">
    <property type="term" value="P:lipid A biosynthetic process"/>
    <property type="evidence" value="ECO:0007669"/>
    <property type="project" value="UniProtKB-UniRule"/>
</dbReference>
<dbReference type="GO" id="GO:0009244">
    <property type="term" value="P:lipopolysaccharide core region biosynthetic process"/>
    <property type="evidence" value="ECO:0007669"/>
    <property type="project" value="TreeGrafter"/>
</dbReference>
<dbReference type="HAMAP" id="MF_00409">
    <property type="entry name" value="LpxK"/>
    <property type="match status" value="1"/>
</dbReference>
<dbReference type="InterPro" id="IPR003758">
    <property type="entry name" value="LpxK"/>
</dbReference>
<dbReference type="InterPro" id="IPR027417">
    <property type="entry name" value="P-loop_NTPase"/>
</dbReference>
<dbReference type="NCBIfam" id="TIGR00682">
    <property type="entry name" value="lpxK"/>
    <property type="match status" value="1"/>
</dbReference>
<dbReference type="PANTHER" id="PTHR42724">
    <property type="entry name" value="TETRAACYLDISACCHARIDE 4'-KINASE"/>
    <property type="match status" value="1"/>
</dbReference>
<dbReference type="PANTHER" id="PTHR42724:SF1">
    <property type="entry name" value="TETRAACYLDISACCHARIDE 4'-KINASE, MITOCHONDRIAL-RELATED"/>
    <property type="match status" value="1"/>
</dbReference>
<dbReference type="Pfam" id="PF02606">
    <property type="entry name" value="LpxK"/>
    <property type="match status" value="1"/>
</dbReference>
<dbReference type="SUPFAM" id="SSF52540">
    <property type="entry name" value="P-loop containing nucleoside triphosphate hydrolases"/>
    <property type="match status" value="1"/>
</dbReference>
<keyword id="KW-0067">ATP-binding</keyword>
<keyword id="KW-0418">Kinase</keyword>
<keyword id="KW-0441">Lipid A biosynthesis</keyword>
<keyword id="KW-0444">Lipid biosynthesis</keyword>
<keyword id="KW-0443">Lipid metabolism</keyword>
<keyword id="KW-0547">Nucleotide-binding</keyword>
<keyword id="KW-1185">Reference proteome</keyword>
<keyword id="KW-0808">Transferase</keyword>
<proteinExistence type="inferred from homology"/>
<feature type="chain" id="PRO_0000291244" description="Tetraacyldisaccharide 4'-kinase">
    <location>
        <begin position="1"/>
        <end position="338"/>
    </location>
</feature>
<feature type="binding site" evidence="1">
    <location>
        <begin position="63"/>
        <end position="70"/>
    </location>
    <ligand>
        <name>ATP</name>
        <dbReference type="ChEBI" id="CHEBI:30616"/>
    </ligand>
</feature>
<evidence type="ECO:0000255" key="1">
    <source>
        <dbReference type="HAMAP-Rule" id="MF_00409"/>
    </source>
</evidence>
<organism>
    <name type="scientific">Shewanella loihica (strain ATCC BAA-1088 / PV-4)</name>
    <dbReference type="NCBI Taxonomy" id="323850"/>
    <lineage>
        <taxon>Bacteria</taxon>
        <taxon>Pseudomonadati</taxon>
        <taxon>Pseudomonadota</taxon>
        <taxon>Gammaproteobacteria</taxon>
        <taxon>Alteromonadales</taxon>
        <taxon>Shewanellaceae</taxon>
        <taxon>Shewanella</taxon>
    </lineage>
</organism>
<reference key="1">
    <citation type="submission" date="2007-03" db="EMBL/GenBank/DDBJ databases">
        <title>Complete sequence of Shewanella loihica PV-4.</title>
        <authorList>
            <consortium name="US DOE Joint Genome Institute"/>
            <person name="Copeland A."/>
            <person name="Lucas S."/>
            <person name="Lapidus A."/>
            <person name="Barry K."/>
            <person name="Detter J.C."/>
            <person name="Glavina del Rio T."/>
            <person name="Hammon N."/>
            <person name="Israni S."/>
            <person name="Dalin E."/>
            <person name="Tice H."/>
            <person name="Pitluck S."/>
            <person name="Chain P."/>
            <person name="Malfatti S."/>
            <person name="Shin M."/>
            <person name="Vergez L."/>
            <person name="Schmutz J."/>
            <person name="Larimer F."/>
            <person name="Land M."/>
            <person name="Hauser L."/>
            <person name="Kyrpides N."/>
            <person name="Mikhailova N."/>
            <person name="Romine M.F."/>
            <person name="Serres G."/>
            <person name="Fredrickson J."/>
            <person name="Tiedje J."/>
            <person name="Richardson P."/>
        </authorList>
    </citation>
    <scope>NUCLEOTIDE SEQUENCE [LARGE SCALE GENOMIC DNA]</scope>
    <source>
        <strain>ATCC BAA-1088 / PV-4</strain>
    </source>
</reference>
<accession>A3QDF8</accession>
<gene>
    <name evidence="1" type="primary">lpxK</name>
    <name type="ordered locus">Shew_1639</name>
</gene>
<sequence>MQALVNRLWYDRQAGVHWLLVLLLLPLSGLFYLLTSLRRQLFRLGLKASARLDVPVIVVGNITVGGSGKTPTVIYLIELLRRNGYRPGVISRGYGVEFSGCKRVIAGMPANEVGDEPAMIVARTQVPMVIGSDRVAAGKALMDWQAVDVIISDDGLQHYRLKRDIEILVLDGKRRFGNGLLLPAGPLREGRWRQGRVDFTLVNGEGSGPEEFEMALAPGNWRSVADGQVVTANVDKSHESVAIAGIGNPQRFFDTLSEIGVQPSGQHAFDDHQAYSLEAIETVAAGRGVLMTEKDAVKCREFAKSNWWYLPVDAKIAPEFEQQLLTLLKRRENVQQGN</sequence>
<protein>
    <recommendedName>
        <fullName evidence="1">Tetraacyldisaccharide 4'-kinase</fullName>
        <ecNumber evidence="1">2.7.1.130</ecNumber>
    </recommendedName>
    <alternativeName>
        <fullName evidence="1">Lipid A 4'-kinase</fullName>
    </alternativeName>
</protein>
<name>LPXK_SHELP</name>
<comment type="function">
    <text evidence="1">Transfers the gamma-phosphate of ATP to the 4'-position of a tetraacyldisaccharide 1-phosphate intermediate (termed DS-1-P) to form tetraacyldisaccharide 1,4'-bis-phosphate (lipid IVA).</text>
</comment>
<comment type="catalytic activity">
    <reaction evidence="1">
        <text>a lipid A disaccharide + ATP = a lipid IVA + ADP + H(+)</text>
        <dbReference type="Rhea" id="RHEA:67840"/>
        <dbReference type="ChEBI" id="CHEBI:15378"/>
        <dbReference type="ChEBI" id="CHEBI:30616"/>
        <dbReference type="ChEBI" id="CHEBI:176343"/>
        <dbReference type="ChEBI" id="CHEBI:176425"/>
        <dbReference type="ChEBI" id="CHEBI:456216"/>
        <dbReference type="EC" id="2.7.1.130"/>
    </reaction>
</comment>
<comment type="pathway">
    <text evidence="1">Glycolipid biosynthesis; lipid IV(A) biosynthesis; lipid IV(A) from (3R)-3-hydroxytetradecanoyl-[acyl-carrier-protein] and UDP-N-acetyl-alpha-D-glucosamine: step 6/6.</text>
</comment>
<comment type="similarity">
    <text evidence="1">Belongs to the LpxK family.</text>
</comment>